<evidence type="ECO:0000305" key="1"/>
<feature type="chain" id="PRO_0000150388" description="Cobalt-precorrin-2 C(20)-methyltransferase">
    <location>
        <begin position="1"/>
        <end position="237"/>
    </location>
</feature>
<feature type="sequence conflict" description="In Ref. 1; AAA27263." evidence="1" ref="1">
    <original>Q</original>
    <variation>T</variation>
    <location>
        <position position="188"/>
    </location>
</feature>
<accession>Q05593</accession>
<comment type="function">
    <text>Methylates cobalt-precorrin-2 at the C-20 position to produce cobalt-precorrin-3A in the anaerobic cobalamin biosynthesis pathway.</text>
</comment>
<comment type="catalytic activity">
    <reaction>
        <text>Co-precorrin-2 + S-adenosyl-L-methionine = Co-precorrin-3 + S-adenosyl-L-homocysteine + H(+)</text>
        <dbReference type="Rhea" id="RHEA:17997"/>
        <dbReference type="ChEBI" id="CHEBI:15378"/>
        <dbReference type="ChEBI" id="CHEBI:57856"/>
        <dbReference type="ChEBI" id="CHEBI:59789"/>
        <dbReference type="ChEBI" id="CHEBI:60053"/>
        <dbReference type="ChEBI" id="CHEBI:60060"/>
        <dbReference type="EC" id="2.1.1.151"/>
    </reaction>
</comment>
<comment type="pathway">
    <text>Cofactor biosynthesis; adenosylcobalamin biosynthesis; cob(II)yrinate a,c-diamide from sirohydrochlorin (anaerobic route): step 2/10.</text>
</comment>
<comment type="subunit">
    <text>Homodimer.</text>
</comment>
<comment type="similarity">
    <text evidence="1">Belongs to the precorrin methyltransferase family.</text>
</comment>
<gene>
    <name type="primary">cbiL</name>
    <name type="ordered locus">STM2024</name>
</gene>
<keyword id="KW-0169">Cobalamin biosynthesis</keyword>
<keyword id="KW-0903">Direct protein sequencing</keyword>
<keyword id="KW-0489">Methyltransferase</keyword>
<keyword id="KW-1185">Reference proteome</keyword>
<keyword id="KW-0949">S-adenosyl-L-methionine</keyword>
<keyword id="KW-0808">Transferase</keyword>
<reference key="1">
    <citation type="journal article" date="1993" name="J. Bacteriol.">
        <title>Characterization of the cobalamin (vitamin B12) biosynthetic genes of Salmonella typhimurium.</title>
        <authorList>
            <person name="Roth J.R."/>
            <person name="Lawrence J.G."/>
            <person name="Rubenfield M."/>
            <person name="Kieffer-Higgins S."/>
            <person name="Church G.M."/>
        </authorList>
    </citation>
    <scope>NUCLEOTIDE SEQUENCE [GENOMIC DNA]</scope>
    <scope>PROTEIN SEQUENCE OF N-TERMINUS</scope>
    <source>
        <strain>LT2</strain>
    </source>
</reference>
<reference key="2">
    <citation type="journal article" date="2001" name="Nature">
        <title>Complete genome sequence of Salmonella enterica serovar Typhimurium LT2.</title>
        <authorList>
            <person name="McClelland M."/>
            <person name="Sanderson K.E."/>
            <person name="Spieth J."/>
            <person name="Clifton S.W."/>
            <person name="Latreille P."/>
            <person name="Courtney L."/>
            <person name="Porwollik S."/>
            <person name="Ali J."/>
            <person name="Dante M."/>
            <person name="Du F."/>
            <person name="Hou S."/>
            <person name="Layman D."/>
            <person name="Leonard S."/>
            <person name="Nguyen C."/>
            <person name="Scott K."/>
            <person name="Holmes A."/>
            <person name="Grewal N."/>
            <person name="Mulvaney E."/>
            <person name="Ryan E."/>
            <person name="Sun H."/>
            <person name="Florea L."/>
            <person name="Miller W."/>
            <person name="Stoneking T."/>
            <person name="Nhan M."/>
            <person name="Waterston R."/>
            <person name="Wilson R.K."/>
        </authorList>
    </citation>
    <scope>NUCLEOTIDE SEQUENCE [LARGE SCALE GENOMIC DNA]</scope>
    <source>
        <strain>LT2 / SGSC1412 / ATCC 700720</strain>
    </source>
</reference>
<reference key="3">
    <citation type="journal article" date="1992" name="FEBS Lett.">
        <title>Expression of 9 Salmonella typhimurium enzymes for cobinamide synthesis. Identification of the 11-methyl and 20-methyl transferases of corrin biosynthesis.</title>
        <authorList>
            <person name="Roessner C.A."/>
            <person name="Warren M.J."/>
            <person name="Santander P.J."/>
            <person name="Atshaves B.P."/>
            <person name="Ozaki S."/>
            <person name="Stolowich N.J."/>
            <person name="Iida K."/>
            <person name="Scott A.I."/>
        </authorList>
    </citation>
    <scope>PROTEIN SEQUENCE OF 1-10</scope>
</reference>
<name>CBIL_SALTY</name>
<sequence length="237" mass="25806">MNGKLYALSTGPGAPDLITVRAARILGSLDILYAPAGRKGGDSLALSIVRDYLGEQTEVRCCHFPMSADGAEKEAVWNEVAAALTAEVEAGKQVGFITLGDAMLFSTWIFLLQRIGCPEWLEIVPGVTSFAAIAARAKMPLAIERQSLAVISCTAPEAEIAQALQQHDSLVLMKVYGRFARIKALLAQAGLLECALMMSEATLPGEQCWRHLHEVNDDRPLPYFSTILVNKQWEYAE</sequence>
<protein>
    <recommendedName>
        <fullName>Cobalt-precorrin-2 C(20)-methyltransferase</fullName>
        <ecNumber>2.1.1.151</ecNumber>
    </recommendedName>
    <alternativeName>
        <fullName>S-adenosyl-L-methionine--cobalt-precorrin-2 methyltransferase</fullName>
    </alternativeName>
</protein>
<dbReference type="EC" id="2.1.1.151"/>
<dbReference type="EMBL" id="L12006">
    <property type="protein sequence ID" value="AAA27263.1"/>
    <property type="molecule type" value="Genomic_DNA"/>
</dbReference>
<dbReference type="EMBL" id="AE006468">
    <property type="protein sequence ID" value="AAL20928.1"/>
    <property type="molecule type" value="Genomic_DNA"/>
</dbReference>
<dbReference type="RefSeq" id="NP_460969.1">
    <property type="nucleotide sequence ID" value="NC_003197.2"/>
</dbReference>
<dbReference type="RefSeq" id="WP_001013552.1">
    <property type="nucleotide sequence ID" value="NC_003197.2"/>
</dbReference>
<dbReference type="SMR" id="Q05593"/>
<dbReference type="STRING" id="99287.STM2024"/>
<dbReference type="PaxDb" id="99287-STM2024"/>
<dbReference type="GeneID" id="1253545"/>
<dbReference type="KEGG" id="stm:STM2024"/>
<dbReference type="PATRIC" id="fig|99287.12.peg.2146"/>
<dbReference type="HOGENOM" id="CLU_076014_3_0_6"/>
<dbReference type="OMA" id="LYGSFMH"/>
<dbReference type="PhylomeDB" id="Q05593"/>
<dbReference type="BioCyc" id="MetaCyc:MONOMER-13216"/>
<dbReference type="BioCyc" id="SENT99287:STM2024-MONOMER"/>
<dbReference type="UniPathway" id="UPA00148">
    <property type="reaction ID" value="UER00224"/>
</dbReference>
<dbReference type="Proteomes" id="UP000001014">
    <property type="component" value="Chromosome"/>
</dbReference>
<dbReference type="GO" id="GO:0043781">
    <property type="term" value="F:cobalt-factor II C20-methyltransferase activity"/>
    <property type="evidence" value="ECO:0007669"/>
    <property type="project" value="UniProtKB-EC"/>
</dbReference>
<dbReference type="GO" id="GO:0030788">
    <property type="term" value="F:precorrin-2 C20-methyltransferase activity"/>
    <property type="evidence" value="ECO:0007669"/>
    <property type="project" value="InterPro"/>
</dbReference>
<dbReference type="GO" id="GO:0009236">
    <property type="term" value="P:cobalamin biosynthetic process"/>
    <property type="evidence" value="ECO:0007669"/>
    <property type="project" value="UniProtKB-UniPathway"/>
</dbReference>
<dbReference type="GO" id="GO:0032259">
    <property type="term" value="P:methylation"/>
    <property type="evidence" value="ECO:0007669"/>
    <property type="project" value="UniProtKB-KW"/>
</dbReference>
<dbReference type="CDD" id="cd11645">
    <property type="entry name" value="Precorrin_2_C20_MT"/>
    <property type="match status" value="1"/>
</dbReference>
<dbReference type="Gene3D" id="3.40.1010.10">
    <property type="entry name" value="Cobalt-precorrin-4 Transmethylase, Domain 1"/>
    <property type="match status" value="1"/>
</dbReference>
<dbReference type="Gene3D" id="3.30.950.10">
    <property type="entry name" value="Methyltransferase, Cobalt-precorrin-4 Transmethylase, Domain 2"/>
    <property type="match status" value="1"/>
</dbReference>
<dbReference type="InterPro" id="IPR000878">
    <property type="entry name" value="4pyrrol_Mease"/>
</dbReference>
<dbReference type="InterPro" id="IPR035996">
    <property type="entry name" value="4pyrrol_Methylase_sf"/>
</dbReference>
<dbReference type="InterPro" id="IPR014777">
    <property type="entry name" value="4pyrrole_Mease_sub1"/>
</dbReference>
<dbReference type="InterPro" id="IPR014776">
    <property type="entry name" value="4pyrrole_Mease_sub2"/>
</dbReference>
<dbReference type="InterPro" id="IPR012382">
    <property type="entry name" value="CobI/CbiL"/>
</dbReference>
<dbReference type="InterPro" id="IPR006364">
    <property type="entry name" value="CobI/CbiL/CobIJ_dom"/>
</dbReference>
<dbReference type="InterPro" id="IPR003043">
    <property type="entry name" value="Uropor_MeTrfase_CS"/>
</dbReference>
<dbReference type="NCBIfam" id="TIGR01467">
    <property type="entry name" value="cobI_cbiL"/>
    <property type="match status" value="1"/>
</dbReference>
<dbReference type="NCBIfam" id="NF004061">
    <property type="entry name" value="PRK05576.1-4"/>
    <property type="match status" value="1"/>
</dbReference>
<dbReference type="PANTHER" id="PTHR43467">
    <property type="entry name" value="COBALT-PRECORRIN-2 C(20)-METHYLTRANSFERASE"/>
    <property type="match status" value="1"/>
</dbReference>
<dbReference type="PANTHER" id="PTHR43467:SF2">
    <property type="entry name" value="COBALT-PRECORRIN-2 C(20)-METHYLTRANSFERASE"/>
    <property type="match status" value="1"/>
</dbReference>
<dbReference type="Pfam" id="PF00590">
    <property type="entry name" value="TP_methylase"/>
    <property type="match status" value="1"/>
</dbReference>
<dbReference type="PIRSF" id="PIRSF036427">
    <property type="entry name" value="Precrrn-2_mtase"/>
    <property type="match status" value="1"/>
</dbReference>
<dbReference type="SUPFAM" id="SSF53790">
    <property type="entry name" value="Tetrapyrrole methylase"/>
    <property type="match status" value="1"/>
</dbReference>
<dbReference type="PROSITE" id="PS00839">
    <property type="entry name" value="SUMT_1"/>
    <property type="match status" value="1"/>
</dbReference>
<dbReference type="PROSITE" id="PS00840">
    <property type="entry name" value="SUMT_2"/>
    <property type="match status" value="1"/>
</dbReference>
<proteinExistence type="evidence at protein level"/>
<organism>
    <name type="scientific">Salmonella typhimurium (strain LT2 / SGSC1412 / ATCC 700720)</name>
    <dbReference type="NCBI Taxonomy" id="99287"/>
    <lineage>
        <taxon>Bacteria</taxon>
        <taxon>Pseudomonadati</taxon>
        <taxon>Pseudomonadota</taxon>
        <taxon>Gammaproteobacteria</taxon>
        <taxon>Enterobacterales</taxon>
        <taxon>Enterobacteriaceae</taxon>
        <taxon>Salmonella</taxon>
    </lineage>
</organism>